<dbReference type="EC" id="2.3.1.286" evidence="1 2"/>
<dbReference type="EMBL" id="BA000004">
    <property type="protein sequence ID" value="BAB04626.1"/>
    <property type="molecule type" value="Genomic_DNA"/>
</dbReference>
<dbReference type="PIR" id="C83763">
    <property type="entry name" value="C83763"/>
</dbReference>
<dbReference type="RefSeq" id="WP_010897080.1">
    <property type="nucleotide sequence ID" value="NC_002570.2"/>
</dbReference>
<dbReference type="SMR" id="Q9KEE5"/>
<dbReference type="STRING" id="272558.gene:10726781"/>
<dbReference type="KEGG" id="bha:BH0907"/>
<dbReference type="eggNOG" id="COG0846">
    <property type="taxonomic scope" value="Bacteria"/>
</dbReference>
<dbReference type="HOGENOM" id="CLU_023643_3_0_9"/>
<dbReference type="OrthoDB" id="9800582at2"/>
<dbReference type="Proteomes" id="UP000001258">
    <property type="component" value="Chromosome"/>
</dbReference>
<dbReference type="GO" id="GO:0005737">
    <property type="term" value="C:cytoplasm"/>
    <property type="evidence" value="ECO:0007669"/>
    <property type="project" value="UniProtKB-SubCell"/>
</dbReference>
<dbReference type="GO" id="GO:0017136">
    <property type="term" value="F:histone deacetylase activity, NAD-dependent"/>
    <property type="evidence" value="ECO:0007669"/>
    <property type="project" value="TreeGrafter"/>
</dbReference>
<dbReference type="GO" id="GO:0070403">
    <property type="term" value="F:NAD+ binding"/>
    <property type="evidence" value="ECO:0007669"/>
    <property type="project" value="UniProtKB-UniRule"/>
</dbReference>
<dbReference type="GO" id="GO:0008270">
    <property type="term" value="F:zinc ion binding"/>
    <property type="evidence" value="ECO:0007669"/>
    <property type="project" value="UniProtKB-UniRule"/>
</dbReference>
<dbReference type="CDD" id="cd01413">
    <property type="entry name" value="SIR2_Af2"/>
    <property type="match status" value="1"/>
</dbReference>
<dbReference type="Gene3D" id="3.30.1600.10">
    <property type="entry name" value="SIR2/SIRT2 'Small Domain"/>
    <property type="match status" value="1"/>
</dbReference>
<dbReference type="Gene3D" id="3.40.50.1220">
    <property type="entry name" value="TPP-binding domain"/>
    <property type="match status" value="1"/>
</dbReference>
<dbReference type="HAMAP" id="MF_01968">
    <property type="entry name" value="Sirtuin_ClassU"/>
    <property type="match status" value="1"/>
</dbReference>
<dbReference type="InterPro" id="IPR029035">
    <property type="entry name" value="DHS-like_NAD/FAD-binding_dom"/>
</dbReference>
<dbReference type="InterPro" id="IPR050134">
    <property type="entry name" value="NAD-dep_sirtuin_deacylases"/>
</dbReference>
<dbReference type="InterPro" id="IPR003000">
    <property type="entry name" value="Sirtuin"/>
</dbReference>
<dbReference type="InterPro" id="IPR026591">
    <property type="entry name" value="Sirtuin_cat_small_dom_sf"/>
</dbReference>
<dbReference type="InterPro" id="IPR028628">
    <property type="entry name" value="Sirtuin_class_U"/>
</dbReference>
<dbReference type="InterPro" id="IPR026590">
    <property type="entry name" value="Ssirtuin_cat_dom"/>
</dbReference>
<dbReference type="NCBIfam" id="NF001753">
    <property type="entry name" value="PRK00481.1-3"/>
    <property type="match status" value="1"/>
</dbReference>
<dbReference type="PANTHER" id="PTHR11085:SF4">
    <property type="entry name" value="NAD-DEPENDENT PROTEIN DEACYLASE"/>
    <property type="match status" value="1"/>
</dbReference>
<dbReference type="PANTHER" id="PTHR11085">
    <property type="entry name" value="NAD-DEPENDENT PROTEIN DEACYLASE SIRTUIN-5, MITOCHONDRIAL-RELATED"/>
    <property type="match status" value="1"/>
</dbReference>
<dbReference type="Pfam" id="PF02146">
    <property type="entry name" value="SIR2"/>
    <property type="match status" value="1"/>
</dbReference>
<dbReference type="SUPFAM" id="SSF52467">
    <property type="entry name" value="DHS-like NAD/FAD-binding domain"/>
    <property type="match status" value="1"/>
</dbReference>
<dbReference type="PROSITE" id="PS50305">
    <property type="entry name" value="SIRTUIN"/>
    <property type="match status" value="1"/>
</dbReference>
<comment type="function">
    <text evidence="1">NAD-dependent protein deacetylase which modulates the activities of several enzymes which are inactive in their acetylated form.</text>
</comment>
<comment type="catalytic activity">
    <reaction evidence="1">
        <text>N(6)-acetyl-L-lysyl-[protein] + NAD(+) + H2O = 2''-O-acetyl-ADP-D-ribose + nicotinamide + L-lysyl-[protein]</text>
        <dbReference type="Rhea" id="RHEA:43636"/>
        <dbReference type="Rhea" id="RHEA-COMP:9752"/>
        <dbReference type="Rhea" id="RHEA-COMP:10731"/>
        <dbReference type="ChEBI" id="CHEBI:15377"/>
        <dbReference type="ChEBI" id="CHEBI:17154"/>
        <dbReference type="ChEBI" id="CHEBI:29969"/>
        <dbReference type="ChEBI" id="CHEBI:57540"/>
        <dbReference type="ChEBI" id="CHEBI:61930"/>
        <dbReference type="ChEBI" id="CHEBI:83767"/>
        <dbReference type="EC" id="2.3.1.286"/>
    </reaction>
</comment>
<comment type="cofactor">
    <cofactor evidence="1">
        <name>Zn(2+)</name>
        <dbReference type="ChEBI" id="CHEBI:29105"/>
    </cofactor>
    <text evidence="1">Binds 1 zinc ion per subunit.</text>
</comment>
<comment type="subcellular location">
    <subcellularLocation>
        <location evidence="1">Cytoplasm</location>
    </subcellularLocation>
</comment>
<comment type="similarity">
    <text evidence="1">Belongs to the sirtuin family. Class U subfamily.</text>
</comment>
<proteinExistence type="inferred from homology"/>
<gene>
    <name evidence="1" type="primary">cobB</name>
    <name type="ordered locus">BH0907</name>
</gene>
<evidence type="ECO:0000255" key="1">
    <source>
        <dbReference type="HAMAP-Rule" id="MF_01968"/>
    </source>
</evidence>
<evidence type="ECO:0000255" key="2">
    <source>
        <dbReference type="PROSITE-ProRule" id="PRU00236"/>
    </source>
</evidence>
<sequence length="237" mass="26108">MLTTWLTEAKKIVIFTGAGMSTESGVPDFRSSRGLWQGKNPEALASVDAMDHNREAFIDFYRMRIEGLQGVRPHKGYDVLAAWEKELPITSIITQNTDGLHEQAGSEVVLPLHGSIQRLYCVACGQRYDVARYITNEPYCSCGGFIRPAVVLFGEMLNTDTLALAERHTKEADLFLVLGSSLVVSPANLFPKIAKECGAKLVIVNHDETPLDPLADLVIQDQSIGTFLEETNRALQA</sequence>
<organism>
    <name type="scientific">Halalkalibacterium halodurans (strain ATCC BAA-125 / DSM 18197 / FERM 7344 / JCM 9153 / C-125)</name>
    <name type="common">Bacillus halodurans</name>
    <dbReference type="NCBI Taxonomy" id="272558"/>
    <lineage>
        <taxon>Bacteria</taxon>
        <taxon>Bacillati</taxon>
        <taxon>Bacillota</taxon>
        <taxon>Bacilli</taxon>
        <taxon>Bacillales</taxon>
        <taxon>Bacillaceae</taxon>
        <taxon>Halalkalibacterium (ex Joshi et al. 2022)</taxon>
    </lineage>
</organism>
<reference key="1">
    <citation type="journal article" date="2000" name="Nucleic Acids Res.">
        <title>Complete genome sequence of the alkaliphilic bacterium Bacillus halodurans and genomic sequence comparison with Bacillus subtilis.</title>
        <authorList>
            <person name="Takami H."/>
            <person name="Nakasone K."/>
            <person name="Takaki Y."/>
            <person name="Maeno G."/>
            <person name="Sasaki R."/>
            <person name="Masui N."/>
            <person name="Fuji F."/>
            <person name="Hirama C."/>
            <person name="Nakamura Y."/>
            <person name="Ogasawara N."/>
            <person name="Kuhara S."/>
            <person name="Horikoshi K."/>
        </authorList>
    </citation>
    <scope>NUCLEOTIDE SEQUENCE [LARGE SCALE GENOMIC DNA]</scope>
    <source>
        <strain>ATCC BAA-125 / DSM 18197 / FERM 7344 / JCM 9153 / C-125</strain>
    </source>
</reference>
<keyword id="KW-0963">Cytoplasm</keyword>
<keyword id="KW-0479">Metal-binding</keyword>
<keyword id="KW-0520">NAD</keyword>
<keyword id="KW-1185">Reference proteome</keyword>
<keyword id="KW-0808">Transferase</keyword>
<keyword id="KW-0862">Zinc</keyword>
<feature type="chain" id="PRO_0000110291" description="NAD-dependent protein deacetylase">
    <location>
        <begin position="1"/>
        <end position="237"/>
    </location>
</feature>
<feature type="domain" description="Deacetylase sirtuin-type" evidence="2">
    <location>
        <begin position="1"/>
        <end position="237"/>
    </location>
</feature>
<feature type="active site" description="Proton acceptor" evidence="2">
    <location>
        <position position="113"/>
    </location>
</feature>
<feature type="binding site" evidence="1">
    <location>
        <position position="18"/>
    </location>
    <ligand>
        <name>NAD(+)</name>
        <dbReference type="ChEBI" id="CHEBI:57540"/>
    </ligand>
</feature>
<feature type="binding site" evidence="1">
    <location>
        <position position="22"/>
    </location>
    <ligand>
        <name>NAD(+)</name>
        <dbReference type="ChEBI" id="CHEBI:57540"/>
    </ligand>
</feature>
<feature type="binding site" evidence="1">
    <location>
        <position position="29"/>
    </location>
    <ligand>
        <name>NAD(+)</name>
        <dbReference type="ChEBI" id="CHEBI:57540"/>
    </ligand>
</feature>
<feature type="binding site" evidence="1">
    <location>
        <position position="29"/>
    </location>
    <ligand>
        <name>nicotinamide</name>
        <dbReference type="ChEBI" id="CHEBI:17154"/>
    </ligand>
</feature>
<feature type="binding site" evidence="1">
    <location>
        <position position="30"/>
    </location>
    <ligand>
        <name>NAD(+)</name>
        <dbReference type="ChEBI" id="CHEBI:57540"/>
    </ligand>
</feature>
<feature type="binding site" evidence="1">
    <location>
        <position position="95"/>
    </location>
    <ligand>
        <name>NAD(+)</name>
        <dbReference type="ChEBI" id="CHEBI:57540"/>
    </ligand>
</feature>
<feature type="binding site" evidence="1">
    <location>
        <position position="98"/>
    </location>
    <ligand>
        <name>NAD(+)</name>
        <dbReference type="ChEBI" id="CHEBI:57540"/>
    </ligand>
</feature>
<feature type="binding site" evidence="1">
    <location>
        <position position="98"/>
    </location>
    <ligand>
        <name>nicotinamide</name>
        <dbReference type="ChEBI" id="CHEBI:17154"/>
    </ligand>
</feature>
<feature type="binding site" evidence="1">
    <location>
        <position position="113"/>
    </location>
    <ligand>
        <name>NAD(+)</name>
        <dbReference type="ChEBI" id="CHEBI:57540"/>
    </ligand>
</feature>
<feature type="binding site" evidence="1">
    <location>
        <position position="121"/>
    </location>
    <ligand>
        <name>Zn(2+)</name>
        <dbReference type="ChEBI" id="CHEBI:29105"/>
    </ligand>
</feature>
<feature type="binding site" evidence="1">
    <location>
        <position position="124"/>
    </location>
    <ligand>
        <name>Zn(2+)</name>
        <dbReference type="ChEBI" id="CHEBI:29105"/>
    </ligand>
</feature>
<feature type="binding site" evidence="1">
    <location>
        <position position="140"/>
    </location>
    <ligand>
        <name>Zn(2+)</name>
        <dbReference type="ChEBI" id="CHEBI:29105"/>
    </ligand>
</feature>
<feature type="binding site" evidence="1">
    <location>
        <position position="142"/>
    </location>
    <ligand>
        <name>Zn(2+)</name>
        <dbReference type="ChEBI" id="CHEBI:29105"/>
    </ligand>
</feature>
<feature type="binding site" evidence="1">
    <location>
        <position position="180"/>
    </location>
    <ligand>
        <name>NAD(+)</name>
        <dbReference type="ChEBI" id="CHEBI:57540"/>
    </ligand>
</feature>
<feature type="binding site" evidence="1">
    <location>
        <position position="181"/>
    </location>
    <ligand>
        <name>NAD(+)</name>
        <dbReference type="ChEBI" id="CHEBI:57540"/>
    </ligand>
</feature>
<feature type="binding site" evidence="1">
    <location>
        <position position="205"/>
    </location>
    <ligand>
        <name>NAD(+)</name>
        <dbReference type="ChEBI" id="CHEBI:57540"/>
    </ligand>
</feature>
<feature type="binding site" evidence="1">
    <location>
        <position position="224"/>
    </location>
    <ligand>
        <name>NAD(+)</name>
        <dbReference type="ChEBI" id="CHEBI:57540"/>
    </ligand>
</feature>
<protein>
    <recommendedName>
        <fullName evidence="1">NAD-dependent protein deacetylase</fullName>
        <ecNumber evidence="1 2">2.3.1.286</ecNumber>
    </recommendedName>
    <alternativeName>
        <fullName evidence="1">Regulatory protein SIR2 homolog</fullName>
    </alternativeName>
</protein>
<name>NPD_HALH5</name>
<accession>Q9KEE5</accession>